<organism>
    <name type="scientific">Mycoplasma mobile (strain ATCC 43663 / 163K / NCTC 11711)</name>
    <name type="common">Mesomycoplasma mobile</name>
    <dbReference type="NCBI Taxonomy" id="267748"/>
    <lineage>
        <taxon>Bacteria</taxon>
        <taxon>Bacillati</taxon>
        <taxon>Mycoplasmatota</taxon>
        <taxon>Mycoplasmoidales</taxon>
        <taxon>Metamycoplasmataceae</taxon>
        <taxon>Mesomycoplasma</taxon>
    </lineage>
</organism>
<name>DNAJ_MYCM1</name>
<reference key="1">
    <citation type="journal article" date="2004" name="Genome Res.">
        <title>The complete genome and proteome of Mycoplasma mobile.</title>
        <authorList>
            <person name="Jaffe J.D."/>
            <person name="Stange-Thomann N."/>
            <person name="Smith C."/>
            <person name="DeCaprio D."/>
            <person name="Fisher S."/>
            <person name="Butler J."/>
            <person name="Calvo S."/>
            <person name="Elkins T."/>
            <person name="FitzGerald M.G."/>
            <person name="Hafez N."/>
            <person name="Kodira C.D."/>
            <person name="Major J."/>
            <person name="Wang S."/>
            <person name="Wilkinson J."/>
            <person name="Nicol R."/>
            <person name="Nusbaum C."/>
            <person name="Birren B."/>
            <person name="Berg H.C."/>
            <person name="Church G.M."/>
        </authorList>
    </citation>
    <scope>NUCLEOTIDE SEQUENCE [LARGE SCALE GENOMIC DNA]</scope>
    <source>
        <strain>ATCC 43663 / NCTC 11711 / 163 K</strain>
    </source>
</reference>
<protein>
    <recommendedName>
        <fullName evidence="1">Chaperone protein DnaJ</fullName>
    </recommendedName>
</protein>
<feature type="chain" id="PRO_0000070828" description="Chaperone protein DnaJ">
    <location>
        <begin position="1"/>
        <end position="373"/>
    </location>
</feature>
<feature type="domain" description="J" evidence="1">
    <location>
        <begin position="4"/>
        <end position="68"/>
    </location>
</feature>
<feature type="repeat" description="CXXCXGXG motif">
    <location>
        <begin position="155"/>
        <end position="162"/>
    </location>
</feature>
<feature type="repeat" description="CXXCXGXG motif">
    <location>
        <begin position="172"/>
        <end position="179"/>
    </location>
</feature>
<feature type="repeat" description="CXXCXGXG motif">
    <location>
        <begin position="198"/>
        <end position="205"/>
    </location>
</feature>
<feature type="repeat" description="CXXCXGXG motif">
    <location>
        <begin position="212"/>
        <end position="219"/>
    </location>
</feature>
<feature type="zinc finger region" description="CR-type" evidence="1">
    <location>
        <begin position="142"/>
        <end position="224"/>
    </location>
</feature>
<feature type="binding site" evidence="1">
    <location>
        <position position="155"/>
    </location>
    <ligand>
        <name>Zn(2+)</name>
        <dbReference type="ChEBI" id="CHEBI:29105"/>
        <label>1</label>
    </ligand>
</feature>
<feature type="binding site" evidence="1">
    <location>
        <position position="158"/>
    </location>
    <ligand>
        <name>Zn(2+)</name>
        <dbReference type="ChEBI" id="CHEBI:29105"/>
        <label>1</label>
    </ligand>
</feature>
<feature type="binding site" evidence="1">
    <location>
        <position position="172"/>
    </location>
    <ligand>
        <name>Zn(2+)</name>
        <dbReference type="ChEBI" id="CHEBI:29105"/>
        <label>2</label>
    </ligand>
</feature>
<feature type="binding site" evidence="1">
    <location>
        <position position="175"/>
    </location>
    <ligand>
        <name>Zn(2+)</name>
        <dbReference type="ChEBI" id="CHEBI:29105"/>
        <label>2</label>
    </ligand>
</feature>
<feature type="binding site" evidence="1">
    <location>
        <position position="198"/>
    </location>
    <ligand>
        <name>Zn(2+)</name>
        <dbReference type="ChEBI" id="CHEBI:29105"/>
        <label>2</label>
    </ligand>
</feature>
<feature type="binding site" evidence="1">
    <location>
        <position position="201"/>
    </location>
    <ligand>
        <name>Zn(2+)</name>
        <dbReference type="ChEBI" id="CHEBI:29105"/>
        <label>2</label>
    </ligand>
</feature>
<feature type="binding site" evidence="1">
    <location>
        <position position="212"/>
    </location>
    <ligand>
        <name>Zn(2+)</name>
        <dbReference type="ChEBI" id="CHEBI:29105"/>
        <label>1</label>
    </ligand>
</feature>
<feature type="binding site" evidence="1">
    <location>
        <position position="215"/>
    </location>
    <ligand>
        <name>Zn(2+)</name>
        <dbReference type="ChEBI" id="CHEBI:29105"/>
        <label>1</label>
    </ligand>
</feature>
<comment type="function">
    <text evidence="1">Participates actively in the response to hyperosmotic and heat shock by preventing the aggregation of stress-denatured proteins and by disaggregating proteins, also in an autonomous, DnaK-independent fashion. Unfolded proteins bind initially to DnaJ; upon interaction with the DnaJ-bound protein, DnaK hydrolyzes its bound ATP, resulting in the formation of a stable complex. GrpE releases ADP from DnaK; ATP binding to DnaK triggers the release of the substrate protein, thus completing the reaction cycle. Several rounds of ATP-dependent interactions between DnaJ, DnaK and GrpE are required for fully efficient folding. Also involved, together with DnaK and GrpE, in the DNA replication of plasmids through activation of initiation proteins.</text>
</comment>
<comment type="cofactor">
    <cofactor evidence="1">
        <name>Zn(2+)</name>
        <dbReference type="ChEBI" id="CHEBI:29105"/>
    </cofactor>
    <text evidence="1">Binds 2 Zn(2+) ions per monomer.</text>
</comment>
<comment type="subunit">
    <text evidence="1">Homodimer.</text>
</comment>
<comment type="subcellular location">
    <subcellularLocation>
        <location evidence="1">Cytoplasm</location>
    </subcellularLocation>
</comment>
<comment type="domain">
    <text evidence="1">The J domain is necessary and sufficient to stimulate DnaK ATPase activity. Zinc center 1 plays an important role in the autonomous, DnaK-independent chaperone activity of DnaJ. Zinc center 2 is essential for interaction with DnaK and for DnaJ activity.</text>
</comment>
<comment type="similarity">
    <text evidence="1">Belongs to the DnaJ family.</text>
</comment>
<gene>
    <name evidence="1" type="primary">dnaJ</name>
    <name type="ordered locus">MMOB4850</name>
</gene>
<evidence type="ECO:0000255" key="1">
    <source>
        <dbReference type="HAMAP-Rule" id="MF_01152"/>
    </source>
</evidence>
<accession>Q6KHF9</accession>
<proteinExistence type="inferred from homology"/>
<sequence length="373" mass="41564">MKKDYYEILGLTKSASKDEIKKAYRTLAKTYHPDVNKETNAEEKFKEITEAYEILNDDVKREQYNQFGHAAFDPNAGGFGGQNPFTNAEGFSGFSDFSGFGSIFTDFFGGFGNSQRANPNRAQRGEDRHAVIKISFIDSVLGKEIVEPLEKFETCNTCNGSGAKSQSDIITCTQCSGMGEQIKITKTFLGQMQQNVICSKCNGIGKEIVEKCLICKGKTHTKTTKNITIKIPAGIQNGQTLRVENYGNAGLNGGSNGNLILSIKVSPHKHFVRKNNDIILRLPVSIKSVIGSEKVEVPTPYGFEIIKIDPNIKTGDELIIKNKGIITKYESGKMIVIFEIFIPKLTSFEKKEISTILEKNADKFYEKWIKEFE</sequence>
<dbReference type="EMBL" id="AE017308">
    <property type="protein sequence ID" value="AAT27971.1"/>
    <property type="molecule type" value="Genomic_DNA"/>
</dbReference>
<dbReference type="RefSeq" id="WP_011265005.1">
    <property type="nucleotide sequence ID" value="NC_006908.1"/>
</dbReference>
<dbReference type="SMR" id="Q6KHF9"/>
<dbReference type="STRING" id="267748.MMOB4850"/>
<dbReference type="KEGG" id="mmo:MMOB4850"/>
<dbReference type="eggNOG" id="COG0484">
    <property type="taxonomic scope" value="Bacteria"/>
</dbReference>
<dbReference type="HOGENOM" id="CLU_017633_0_7_14"/>
<dbReference type="OrthoDB" id="9779889at2"/>
<dbReference type="Proteomes" id="UP000009072">
    <property type="component" value="Chromosome"/>
</dbReference>
<dbReference type="GO" id="GO:0005737">
    <property type="term" value="C:cytoplasm"/>
    <property type="evidence" value="ECO:0007669"/>
    <property type="project" value="UniProtKB-SubCell"/>
</dbReference>
<dbReference type="GO" id="GO:0005524">
    <property type="term" value="F:ATP binding"/>
    <property type="evidence" value="ECO:0007669"/>
    <property type="project" value="InterPro"/>
</dbReference>
<dbReference type="GO" id="GO:0031072">
    <property type="term" value="F:heat shock protein binding"/>
    <property type="evidence" value="ECO:0007669"/>
    <property type="project" value="InterPro"/>
</dbReference>
<dbReference type="GO" id="GO:0051082">
    <property type="term" value="F:unfolded protein binding"/>
    <property type="evidence" value="ECO:0007669"/>
    <property type="project" value="UniProtKB-UniRule"/>
</dbReference>
<dbReference type="GO" id="GO:0008270">
    <property type="term" value="F:zinc ion binding"/>
    <property type="evidence" value="ECO:0007669"/>
    <property type="project" value="UniProtKB-UniRule"/>
</dbReference>
<dbReference type="GO" id="GO:0051085">
    <property type="term" value="P:chaperone cofactor-dependent protein refolding"/>
    <property type="evidence" value="ECO:0007669"/>
    <property type="project" value="TreeGrafter"/>
</dbReference>
<dbReference type="GO" id="GO:0006260">
    <property type="term" value="P:DNA replication"/>
    <property type="evidence" value="ECO:0007669"/>
    <property type="project" value="UniProtKB-KW"/>
</dbReference>
<dbReference type="GO" id="GO:0042026">
    <property type="term" value="P:protein refolding"/>
    <property type="evidence" value="ECO:0007669"/>
    <property type="project" value="TreeGrafter"/>
</dbReference>
<dbReference type="GO" id="GO:0009408">
    <property type="term" value="P:response to heat"/>
    <property type="evidence" value="ECO:0007669"/>
    <property type="project" value="InterPro"/>
</dbReference>
<dbReference type="CDD" id="cd06257">
    <property type="entry name" value="DnaJ"/>
    <property type="match status" value="1"/>
</dbReference>
<dbReference type="CDD" id="cd10747">
    <property type="entry name" value="DnaJ_C"/>
    <property type="match status" value="1"/>
</dbReference>
<dbReference type="CDD" id="cd10719">
    <property type="entry name" value="DnaJ_zf"/>
    <property type="match status" value="1"/>
</dbReference>
<dbReference type="FunFam" id="1.10.287.110:FF:000031">
    <property type="entry name" value="Molecular chaperone DnaJ"/>
    <property type="match status" value="1"/>
</dbReference>
<dbReference type="FunFam" id="2.10.230.10:FF:000002">
    <property type="entry name" value="Molecular chaperone DnaJ"/>
    <property type="match status" value="1"/>
</dbReference>
<dbReference type="Gene3D" id="1.10.287.110">
    <property type="entry name" value="DnaJ domain"/>
    <property type="match status" value="1"/>
</dbReference>
<dbReference type="Gene3D" id="2.10.230.10">
    <property type="entry name" value="Heat shock protein DnaJ, cysteine-rich domain"/>
    <property type="match status" value="1"/>
</dbReference>
<dbReference type="Gene3D" id="2.60.260.20">
    <property type="entry name" value="Urease metallochaperone UreE, N-terminal domain"/>
    <property type="match status" value="2"/>
</dbReference>
<dbReference type="HAMAP" id="MF_01152">
    <property type="entry name" value="DnaJ"/>
    <property type="match status" value="1"/>
</dbReference>
<dbReference type="InterPro" id="IPR012724">
    <property type="entry name" value="DnaJ"/>
</dbReference>
<dbReference type="InterPro" id="IPR002939">
    <property type="entry name" value="DnaJ_C"/>
</dbReference>
<dbReference type="InterPro" id="IPR001623">
    <property type="entry name" value="DnaJ_domain"/>
</dbReference>
<dbReference type="InterPro" id="IPR018253">
    <property type="entry name" value="DnaJ_domain_CS"/>
</dbReference>
<dbReference type="InterPro" id="IPR008971">
    <property type="entry name" value="HSP40/DnaJ_pept-bd"/>
</dbReference>
<dbReference type="InterPro" id="IPR001305">
    <property type="entry name" value="HSP_DnaJ_Cys-rich_dom"/>
</dbReference>
<dbReference type="InterPro" id="IPR036410">
    <property type="entry name" value="HSP_DnaJ_Cys-rich_dom_sf"/>
</dbReference>
<dbReference type="InterPro" id="IPR036869">
    <property type="entry name" value="J_dom_sf"/>
</dbReference>
<dbReference type="NCBIfam" id="TIGR02349">
    <property type="entry name" value="DnaJ_bact"/>
    <property type="match status" value="1"/>
</dbReference>
<dbReference type="PANTHER" id="PTHR43096:SF48">
    <property type="entry name" value="CHAPERONE PROTEIN DNAJ"/>
    <property type="match status" value="1"/>
</dbReference>
<dbReference type="PANTHER" id="PTHR43096">
    <property type="entry name" value="DNAJ HOMOLOG 1, MITOCHONDRIAL-RELATED"/>
    <property type="match status" value="1"/>
</dbReference>
<dbReference type="Pfam" id="PF00226">
    <property type="entry name" value="DnaJ"/>
    <property type="match status" value="1"/>
</dbReference>
<dbReference type="Pfam" id="PF01556">
    <property type="entry name" value="DnaJ_C"/>
    <property type="match status" value="1"/>
</dbReference>
<dbReference type="Pfam" id="PF00684">
    <property type="entry name" value="DnaJ_CXXCXGXG"/>
    <property type="match status" value="1"/>
</dbReference>
<dbReference type="PRINTS" id="PR00625">
    <property type="entry name" value="JDOMAIN"/>
</dbReference>
<dbReference type="SMART" id="SM00271">
    <property type="entry name" value="DnaJ"/>
    <property type="match status" value="1"/>
</dbReference>
<dbReference type="SUPFAM" id="SSF46565">
    <property type="entry name" value="Chaperone J-domain"/>
    <property type="match status" value="1"/>
</dbReference>
<dbReference type="SUPFAM" id="SSF57938">
    <property type="entry name" value="DnaJ/Hsp40 cysteine-rich domain"/>
    <property type="match status" value="1"/>
</dbReference>
<dbReference type="SUPFAM" id="SSF49493">
    <property type="entry name" value="HSP40/DnaJ peptide-binding domain"/>
    <property type="match status" value="2"/>
</dbReference>
<dbReference type="PROSITE" id="PS00636">
    <property type="entry name" value="DNAJ_1"/>
    <property type="match status" value="1"/>
</dbReference>
<dbReference type="PROSITE" id="PS50076">
    <property type="entry name" value="DNAJ_2"/>
    <property type="match status" value="1"/>
</dbReference>
<dbReference type="PROSITE" id="PS51188">
    <property type="entry name" value="ZF_CR"/>
    <property type="match status" value="1"/>
</dbReference>
<keyword id="KW-0143">Chaperone</keyword>
<keyword id="KW-0963">Cytoplasm</keyword>
<keyword id="KW-0235">DNA replication</keyword>
<keyword id="KW-0479">Metal-binding</keyword>
<keyword id="KW-1185">Reference proteome</keyword>
<keyword id="KW-0677">Repeat</keyword>
<keyword id="KW-0346">Stress response</keyword>
<keyword id="KW-0862">Zinc</keyword>
<keyword id="KW-0863">Zinc-finger</keyword>